<gene>
    <name evidence="4" type="primary">chsB</name>
    <name type="ORF">An09g04010</name>
</gene>
<sequence>MAYQGTGNHSPPGYDDGGHRLQDLPAGNNYEEEASRGLLSSQTGPFTGPFDDPQQRNLSPARPTSGYSLTETYAADAGYHDPYSAGGSVYSAQSGENPATAFGVPGRVASPYARSETSSTEAWRQRQAPGGAGSGGGGGLRRYATRKVKLVQGSVLSVDYPVPSAIQNAIQAKYRNDLEGGSEEFTHMRYTAATCDPNEFTLHNGYNLRPAMYNRHTELLIAITYYNEDKTLTARTLHGVMQNIRDIVNLKKSEFWNKGGPAWQKIVVCLVFDGIDPCDKDVLDVLATVGIYQDGVMKRDVDGKETVAHIFEYTTQLSVTPNQQLIRPTDDGPSTLPPVQMMFCLKQKNSKKINSHRWLFNAFGRILNPEVCILLDAGTKPGHKSLLALWEAFYNDKDLGGACGEIHAMLGKGWRNLINPLVAAQNFEYKISNILDKPLESSFGYVSVLPGAFSAYRFRAIMGRPLEQYFHGDHTLSKQLGKKGIEGMNIFKKNMFLAEDRILCFELVAKAGSKWHLSYVKASKGETDVPEGAAEFISQRRRWLNGSFAAGIYSLMHFGRMYKSGHNIIRMFFLHIQMLYNTFSTILTWFSLASYWLTTSVIMDLVGTPSASNGHTGFPFGKTATPIVNTIVKYAYLGFLLLQFILALGNRPKGSRFSYLASFVVFGIIQLYVVVDALYLVVRAFSGSAPMDFDTTHGVGAFLGSFFGSTGAGIIIIALAATFGLYFVASFMYMDPWHMFTSFPQYMAVQSSYINILNVYAFSNWHDVSWGTKGSDKADALPSAKTTKEGGKETVIEEIDKPQADIDSQFEATVKRALTPYVAPVEKDEKSLDDSYKSFRTRLVTFWIFSNALMAVCITSDGVDKFGFTNSATDRTSRFFQALLWSNAVVALFRFIGACWFLGKTGVMCCFARR</sequence>
<organism>
    <name type="scientific">Aspergillus niger (strain ATCC MYA-4892 / CBS 513.88 / FGSC A1513)</name>
    <dbReference type="NCBI Taxonomy" id="425011"/>
    <lineage>
        <taxon>Eukaryota</taxon>
        <taxon>Fungi</taxon>
        <taxon>Dikarya</taxon>
        <taxon>Ascomycota</taxon>
        <taxon>Pezizomycotina</taxon>
        <taxon>Eurotiomycetes</taxon>
        <taxon>Eurotiomycetidae</taxon>
        <taxon>Eurotiales</taxon>
        <taxon>Aspergillaceae</taxon>
        <taxon>Aspergillus</taxon>
        <taxon>Aspergillus subgen. Circumdati</taxon>
    </lineage>
</organism>
<proteinExistence type="inferred from homology"/>
<comment type="function">
    <text evidence="3 6">Polymerizes chitin, a structural polymer of the cell wall and septum, by transferring the sugar moiety of UDP-GlcNAc to the non-reducing end of the growing chitin polymer (Probable). Plays an important role in septal growth or maintenance (PubMed:38468360). Mediates colony spore formation (PubMed:38468360).</text>
</comment>
<comment type="catalytic activity">
    <reaction evidence="6">
        <text>[(1-&gt;4)-N-acetyl-beta-D-glucosaminyl](n) + UDP-N-acetyl-alpha-D-glucosamine = [(1-&gt;4)-N-acetyl-beta-D-glucosaminyl](n+1) + UDP + H(+)</text>
        <dbReference type="Rhea" id="RHEA:16637"/>
        <dbReference type="Rhea" id="RHEA-COMP:9593"/>
        <dbReference type="Rhea" id="RHEA-COMP:9595"/>
        <dbReference type="ChEBI" id="CHEBI:15378"/>
        <dbReference type="ChEBI" id="CHEBI:17029"/>
        <dbReference type="ChEBI" id="CHEBI:57705"/>
        <dbReference type="ChEBI" id="CHEBI:58223"/>
        <dbReference type="EC" id="2.4.1.16"/>
    </reaction>
    <physiologicalReaction direction="left-to-right" evidence="6">
        <dbReference type="Rhea" id="RHEA:16638"/>
    </physiologicalReaction>
</comment>
<comment type="subcellular location">
    <subcellularLocation>
        <location evidence="6">Cell membrane</location>
        <topology evidence="1">Multi-pass membrane protein</topology>
    </subcellularLocation>
</comment>
<comment type="disruption phenotype">
    <text evidence="3">Reduces drastically spore production (PubMed:38468360). Leads to resistance to AFP, a small, basic and cysteine-rich peptide that exerts extremely potent antifungal activity by inhibitiing cell wall chitin biosynthesis (PubMed:38468360).</text>
</comment>
<comment type="similarity">
    <text evidence="5">Belongs to the chitin synthase family. Class III subfamily.</text>
</comment>
<protein>
    <recommendedName>
        <fullName evidence="4">Chitin synthase B</fullName>
        <ecNumber evidence="6">2.4.1.16</ecNumber>
    </recommendedName>
    <alternativeName>
        <fullName evidence="5">Chitin-UDP acetyl-glucosaminyl transferase B</fullName>
    </alternativeName>
    <alternativeName>
        <fullName evidence="4">Class-III chitin synthase B</fullName>
    </alternativeName>
</protein>
<name>CHSB_ASPNC</name>
<accession>A2QU15</accession>
<feature type="chain" id="PRO_0000460976" description="Chitin synthase B">
    <location>
        <begin position="1"/>
        <end position="914"/>
    </location>
</feature>
<feature type="transmembrane region" description="Helical" evidence="1">
    <location>
        <begin position="543"/>
        <end position="562"/>
    </location>
</feature>
<feature type="transmembrane region" description="Helical" evidence="1">
    <location>
        <begin position="586"/>
        <end position="606"/>
    </location>
</feature>
<feature type="transmembrane region" description="Helical" evidence="1">
    <location>
        <begin position="627"/>
        <end position="647"/>
    </location>
</feature>
<feature type="transmembrane region" description="Helical" evidence="1">
    <location>
        <begin position="662"/>
        <end position="682"/>
    </location>
</feature>
<feature type="transmembrane region" description="Helical" evidence="1">
    <location>
        <begin position="712"/>
        <end position="732"/>
    </location>
</feature>
<feature type="transmembrane region" description="Helical" evidence="1">
    <location>
        <begin position="843"/>
        <end position="863"/>
    </location>
</feature>
<feature type="transmembrane region" description="Helical" evidence="1">
    <location>
        <begin position="882"/>
        <end position="902"/>
    </location>
</feature>
<feature type="region of interest" description="Disordered" evidence="2">
    <location>
        <begin position="1"/>
        <end position="67"/>
    </location>
</feature>
<feature type="region of interest" description="Disordered" evidence="2">
    <location>
        <begin position="112"/>
        <end position="140"/>
    </location>
</feature>
<feature type="compositionally biased region" description="Gly residues" evidence="2">
    <location>
        <begin position="130"/>
        <end position="140"/>
    </location>
</feature>
<keyword id="KW-1003">Cell membrane</keyword>
<keyword id="KW-0961">Cell wall biogenesis/degradation</keyword>
<keyword id="KW-0328">Glycosyltransferase</keyword>
<keyword id="KW-0472">Membrane</keyword>
<keyword id="KW-1185">Reference proteome</keyword>
<keyword id="KW-0808">Transferase</keyword>
<keyword id="KW-0812">Transmembrane</keyword>
<keyword id="KW-1133">Transmembrane helix</keyword>
<dbReference type="EC" id="2.4.1.16" evidence="6"/>
<dbReference type="EMBL" id="AM270199">
    <property type="protein sequence ID" value="CAK96843.1"/>
    <property type="molecule type" value="Genomic_DNA"/>
</dbReference>
<dbReference type="RefSeq" id="XP_001393717.1">
    <property type="nucleotide sequence ID" value="XM_001393680.2"/>
</dbReference>
<dbReference type="SMR" id="A2QU15"/>
<dbReference type="CAZy" id="GT2">
    <property type="family name" value="Glycosyltransferase Family 2"/>
</dbReference>
<dbReference type="EnsemblFungi" id="CAK96843">
    <property type="protein sequence ID" value="CAK96843"/>
    <property type="gene ID" value="An09g04010"/>
</dbReference>
<dbReference type="GeneID" id="4983936"/>
<dbReference type="KEGG" id="ang:An09g04010"/>
<dbReference type="VEuPathDB" id="FungiDB:An09g04010"/>
<dbReference type="HOGENOM" id="CLU_004760_0_1_1"/>
<dbReference type="Proteomes" id="UP000006706">
    <property type="component" value="Chromosome 1L"/>
</dbReference>
<dbReference type="GO" id="GO:0030428">
    <property type="term" value="C:cell septum"/>
    <property type="evidence" value="ECO:0007669"/>
    <property type="project" value="TreeGrafter"/>
</dbReference>
<dbReference type="GO" id="GO:0005886">
    <property type="term" value="C:plasma membrane"/>
    <property type="evidence" value="ECO:0007669"/>
    <property type="project" value="UniProtKB-SubCell"/>
</dbReference>
<dbReference type="GO" id="GO:0004100">
    <property type="term" value="F:chitin synthase activity"/>
    <property type="evidence" value="ECO:0007669"/>
    <property type="project" value="UniProtKB-EC"/>
</dbReference>
<dbReference type="GO" id="GO:0071555">
    <property type="term" value="P:cell wall organization"/>
    <property type="evidence" value="ECO:0007669"/>
    <property type="project" value="UniProtKB-KW"/>
</dbReference>
<dbReference type="GO" id="GO:0006031">
    <property type="term" value="P:chitin biosynthetic process"/>
    <property type="evidence" value="ECO:0007669"/>
    <property type="project" value="InterPro"/>
</dbReference>
<dbReference type="CDD" id="cd04190">
    <property type="entry name" value="Chitin_synth_C"/>
    <property type="match status" value="1"/>
</dbReference>
<dbReference type="InterPro" id="IPR004835">
    <property type="entry name" value="Chitin_synth"/>
</dbReference>
<dbReference type="InterPro" id="IPR004834">
    <property type="entry name" value="Chitin_synth_fun"/>
</dbReference>
<dbReference type="InterPro" id="IPR013616">
    <property type="entry name" value="Chitin_synth_N"/>
</dbReference>
<dbReference type="InterPro" id="IPR029044">
    <property type="entry name" value="Nucleotide-diphossugar_trans"/>
</dbReference>
<dbReference type="PANTHER" id="PTHR22914">
    <property type="entry name" value="CHITIN SYNTHASE"/>
    <property type="match status" value="1"/>
</dbReference>
<dbReference type="PANTHER" id="PTHR22914:SF11">
    <property type="entry name" value="CHITIN SYNTHASE B"/>
    <property type="match status" value="1"/>
</dbReference>
<dbReference type="Pfam" id="PF01644">
    <property type="entry name" value="Chitin_synth_1"/>
    <property type="match status" value="1"/>
</dbReference>
<dbReference type="Pfam" id="PF08407">
    <property type="entry name" value="Chitin_synth_1N"/>
    <property type="match status" value="1"/>
</dbReference>
<dbReference type="SUPFAM" id="SSF53448">
    <property type="entry name" value="Nucleotide-diphospho-sugar transferases"/>
    <property type="match status" value="1"/>
</dbReference>
<reference key="1">
    <citation type="journal article" date="2007" name="Nat. Biotechnol.">
        <title>Genome sequencing and analysis of the versatile cell factory Aspergillus niger CBS 513.88.</title>
        <authorList>
            <person name="Pel H.J."/>
            <person name="de Winde J.H."/>
            <person name="Archer D.B."/>
            <person name="Dyer P.S."/>
            <person name="Hofmann G."/>
            <person name="Schaap P.J."/>
            <person name="Turner G."/>
            <person name="de Vries R.P."/>
            <person name="Albang R."/>
            <person name="Albermann K."/>
            <person name="Andersen M.R."/>
            <person name="Bendtsen J.D."/>
            <person name="Benen J.A.E."/>
            <person name="van den Berg M."/>
            <person name="Breestraat S."/>
            <person name="Caddick M.X."/>
            <person name="Contreras R."/>
            <person name="Cornell M."/>
            <person name="Coutinho P.M."/>
            <person name="Danchin E.G.J."/>
            <person name="Debets A.J.M."/>
            <person name="Dekker P."/>
            <person name="van Dijck P.W.M."/>
            <person name="van Dijk A."/>
            <person name="Dijkhuizen L."/>
            <person name="Driessen A.J.M."/>
            <person name="d'Enfert C."/>
            <person name="Geysens S."/>
            <person name="Goosen C."/>
            <person name="Groot G.S.P."/>
            <person name="de Groot P.W.J."/>
            <person name="Guillemette T."/>
            <person name="Henrissat B."/>
            <person name="Herweijer M."/>
            <person name="van den Hombergh J.P.T.W."/>
            <person name="van den Hondel C.A.M.J.J."/>
            <person name="van der Heijden R.T.J.M."/>
            <person name="van der Kaaij R.M."/>
            <person name="Klis F.M."/>
            <person name="Kools H.J."/>
            <person name="Kubicek C.P."/>
            <person name="van Kuyk P.A."/>
            <person name="Lauber J."/>
            <person name="Lu X."/>
            <person name="van der Maarel M.J.E.C."/>
            <person name="Meulenberg R."/>
            <person name="Menke H."/>
            <person name="Mortimer M.A."/>
            <person name="Nielsen J."/>
            <person name="Oliver S.G."/>
            <person name="Olsthoorn M."/>
            <person name="Pal K."/>
            <person name="van Peij N.N.M.E."/>
            <person name="Ram A.F.J."/>
            <person name="Rinas U."/>
            <person name="Roubos J.A."/>
            <person name="Sagt C.M.J."/>
            <person name="Schmoll M."/>
            <person name="Sun J."/>
            <person name="Ussery D."/>
            <person name="Varga J."/>
            <person name="Vervecken W."/>
            <person name="van de Vondervoort P.J.J."/>
            <person name="Wedler H."/>
            <person name="Woesten H.A.B."/>
            <person name="Zeng A.-P."/>
            <person name="van Ooyen A.J.J."/>
            <person name="Visser J."/>
            <person name="Stam H."/>
        </authorList>
    </citation>
    <scope>NUCLEOTIDE SEQUENCE [LARGE SCALE GENOMIC DNA]</scope>
    <source>
        <strain>ATCC MYA-4892 / CBS 513.88 / FGSC A1513</strain>
    </source>
</reference>
<reference key="2">
    <citation type="journal article" date="2024" name="Fungal Biol. Biotechnol.">
        <title>Breaking down barriers: comprehensive functional analysis of the Aspergillus niger chitin synthase repertoire.</title>
        <authorList>
            <person name="Barthel L."/>
            <person name="Cairns T."/>
            <person name="Duda S."/>
            <person name="Mueller H."/>
            <person name="Dobbert B."/>
            <person name="Jung S."/>
            <person name="Briesen H."/>
            <person name="Meyer V."/>
        </authorList>
    </citation>
    <scope>FUNCTION</scope>
    <scope>DISRUPTION PHENOTYPE</scope>
</reference>
<evidence type="ECO:0000255" key="1"/>
<evidence type="ECO:0000256" key="2">
    <source>
        <dbReference type="SAM" id="MobiDB-lite"/>
    </source>
</evidence>
<evidence type="ECO:0000269" key="3">
    <source>
    </source>
</evidence>
<evidence type="ECO:0000303" key="4">
    <source>
    </source>
</evidence>
<evidence type="ECO:0000305" key="5"/>
<evidence type="ECO:0000305" key="6">
    <source>
    </source>
</evidence>